<dbReference type="EMBL" id="S48091">
    <property type="protein sequence ID" value="AAB24089.1"/>
    <property type="molecule type" value="Genomic_RNA"/>
</dbReference>
<dbReference type="PIR" id="JQ1928">
    <property type="entry name" value="JQ1928"/>
</dbReference>
<dbReference type="PDB" id="6Y9L">
    <property type="method" value="X-ray"/>
    <property type="resolution" value="4.10 A"/>
    <property type="chains" value="A/B/C/D=36-323"/>
</dbReference>
<dbReference type="PDB" id="6Y9M">
    <property type="method" value="X-ray"/>
    <property type="resolution" value="3.40 A"/>
    <property type="chains" value="A/B/C/D=36-319"/>
</dbReference>
<dbReference type="PDB" id="6YA0">
    <property type="method" value="X-ray"/>
    <property type="resolution" value="2.86 A"/>
    <property type="chains" value="A/B/C=36-323"/>
</dbReference>
<dbReference type="PDB" id="6YA2">
    <property type="method" value="X-ray"/>
    <property type="resolution" value="2.50 A"/>
    <property type="chains" value="A/B/C=99-297"/>
</dbReference>
<dbReference type="PDBsum" id="6Y9L"/>
<dbReference type="PDBsum" id="6Y9M"/>
<dbReference type="PDBsum" id="6YA0"/>
<dbReference type="PDBsum" id="6YA2"/>
<dbReference type="SMR" id="P36291"/>
<dbReference type="GlyCosmos" id="P36291">
    <property type="glycosylation" value="5 sites, No reported glycans"/>
</dbReference>
<dbReference type="iPTMnet" id="P36291"/>
<dbReference type="KEGG" id="vg:956579"/>
<dbReference type="Proteomes" id="UP000006674">
    <property type="component" value="Genome"/>
</dbReference>
<dbReference type="GO" id="GO:0044167">
    <property type="term" value="C:host cell endoplasmic reticulum membrane"/>
    <property type="evidence" value="ECO:0007669"/>
    <property type="project" value="UniProtKB-SubCell"/>
</dbReference>
<dbReference type="GO" id="GO:0044178">
    <property type="term" value="C:host cell Golgi membrane"/>
    <property type="evidence" value="ECO:0007669"/>
    <property type="project" value="UniProtKB-SubCell"/>
</dbReference>
<dbReference type="GO" id="GO:0016020">
    <property type="term" value="C:membrane"/>
    <property type="evidence" value="ECO:0007669"/>
    <property type="project" value="UniProtKB-KW"/>
</dbReference>
<dbReference type="GO" id="GO:0055036">
    <property type="term" value="C:virion membrane"/>
    <property type="evidence" value="ECO:0007669"/>
    <property type="project" value="UniProtKB-SubCell"/>
</dbReference>
<dbReference type="GO" id="GO:0039654">
    <property type="term" value="P:fusion of virus membrane with host endosome membrane"/>
    <property type="evidence" value="ECO:0007669"/>
    <property type="project" value="UniProtKB-KW"/>
</dbReference>
<dbReference type="GO" id="GO:0046718">
    <property type="term" value="P:symbiont entry into host cell"/>
    <property type="evidence" value="ECO:0007669"/>
    <property type="project" value="UniProtKB-KW"/>
</dbReference>
<dbReference type="GO" id="GO:0044003">
    <property type="term" value="P:symbiont-mediated perturbation of host process"/>
    <property type="evidence" value="ECO:0007669"/>
    <property type="project" value="InterPro"/>
</dbReference>
<dbReference type="GO" id="GO:0019062">
    <property type="term" value="P:virion attachment to host cell"/>
    <property type="evidence" value="ECO:0007669"/>
    <property type="project" value="UniProtKB-KW"/>
</dbReference>
<dbReference type="InterPro" id="IPR005167">
    <property type="entry name" value="Bunya_G1"/>
</dbReference>
<dbReference type="InterPro" id="IPR014414">
    <property type="entry name" value="M_poly_TospoV"/>
</dbReference>
<dbReference type="Pfam" id="PF03557">
    <property type="entry name" value="Bunya_G1"/>
    <property type="match status" value="1"/>
</dbReference>
<dbReference type="PIRSF" id="PIRSF003960">
    <property type="entry name" value="M_poly_TospoV"/>
    <property type="match status" value="1"/>
</dbReference>
<name>GP_TSWV1</name>
<organism>
    <name type="scientific">Tomato spotted wilt virus (strain Brazilian Br-01)</name>
    <name type="common">TSWV</name>
    <dbReference type="NCBI Taxonomy" id="36413"/>
    <lineage>
        <taxon>Viruses</taxon>
        <taxon>Riboviria</taxon>
        <taxon>Orthornavirae</taxon>
        <taxon>Negarnaviricota</taxon>
        <taxon>Polyploviricotina</taxon>
        <taxon>Ellioviricetes</taxon>
        <taxon>Bunyavirales</taxon>
        <taxon>Tospoviridae</taxon>
        <taxon>Orthotospovirus</taxon>
        <taxon>Tomato spotted wilt virus</taxon>
    </lineage>
</organism>
<protein>
    <recommendedName>
        <fullName>Envelopment polyprotein</fullName>
    </recommendedName>
    <alternativeName>
        <fullName>M polyprotein</fullName>
    </alternativeName>
    <component>
        <recommendedName>
            <fullName evidence="17">Glycoprotein N</fullName>
            <shortName>Gn</shortName>
        </recommendedName>
        <alternativeName>
            <fullName>Glycoprotein G2</fullName>
        </alternativeName>
    </component>
    <component>
        <recommendedName>
            <fullName evidence="17">Glycoprotein C</fullName>
            <shortName>Gc</shortName>
        </recommendedName>
        <alternativeName>
            <fullName>Glycoprotein G1</fullName>
        </alternativeName>
    </component>
</protein>
<comment type="function">
    <molecule>Glycoprotein N</molecule>
    <text evidence="1 10">Forms the spikes present at the surface of the virion together with Glycoprotein C. They are able to attach the virion to a cell receptor and to promote fusion of membranes after endocytosis of the virion (By similarity). Plays a role in virus binding and/or entry into the vector midgut (PubMed:31413126).</text>
</comment>
<comment type="function">
    <molecule>Glycoprotein C</molecule>
    <text evidence="1 14">Forms the spikes present at the surface of the virion together with Glycoprotein N. They are able to attach the virion to a cell receptor and to promote fusion of membranes after endocytosis of the virion (By similarity). Probable class II fusion protein (PubMed:33672327).</text>
</comment>
<comment type="subunit">
    <molecule>Glycoprotein N</molecule>
    <text evidence="6 8 11 16">Homodimer; disulfide-linked (Probable) (PubMed:33020295). Heterodimer with Glycoprotein C (PubMed:17331557). Interacts with nucleoprotein (PubMed:18973913).</text>
</comment>
<comment type="subunit">
    <molecule>Glycoprotein C</molecule>
    <text evidence="6 8">Heterodimer with Glycoprotein N (PubMed:17331557). Interacts with nucleoprotein (PubMed:18973913).</text>
</comment>
<comment type="subcellular location">
    <molecule>Glycoprotein N</molecule>
    <subcellularLocation>
        <location evidence="7">Virion membrane</location>
        <topology evidence="7">Single-pass type I membrane protein</topology>
    </subcellularLocation>
    <subcellularLocation>
        <location evidence="3 6 7">Host Golgi apparatus membrane</location>
        <topology evidence="7">Single-pass type I membrane protein</topology>
    </subcellularLocation>
    <subcellularLocation>
        <location evidence="3 7">Host endoplasmic reticulum membrane</location>
        <topology evidence="7">Single-pass type I membrane protein</topology>
    </subcellularLocation>
    <text evidence="3 6 7">Glycoprotein C alone is retained in the membrane of the endoplasmic reticulum, but not transported to the Golgi (PubMed:11134314, PubMed:18632951). Coexpression of Glycoprotein C and Glycoprotein N results in efficient transport of Glycoprotein C to the Golgi complex, indicating that their interaction is essential for proper targeting to this organelle, where virion budding occurs (PubMed:11134314, PubMed:17331557, PubMed:18632951).</text>
</comment>
<comment type="subcellular location">
    <molecule>Glycoprotein C</molecule>
    <subcellularLocation>
        <location evidence="7">Virion membrane</location>
        <topology evidence="7">Single-pass type I membrane protein</topology>
    </subcellularLocation>
    <subcellularLocation>
        <location evidence="3 6 7">Host Golgi apparatus membrane</location>
        <topology evidence="7">Single-pass type I membrane protein</topology>
    </subcellularLocation>
    <text evidence="3 6 7">Inserted into the ER membrane, but is not transported to the Golgi without Glycoprotein N.</text>
</comment>
<comment type="domain">
    <text>The cell attachment site present in these glycoproteins may help in the adhesion of virus to cells.</text>
</comment>
<comment type="domain">
    <molecule>Glycoprotein N</molecule>
    <text evidence="3 6 9">The cytoplasmic C-terminus probably contains a Golgi retention signal (PubMed:11134314, PubMed:17331557). The transmembrane domain and C-terminus of Glycoprotein N allow Glycoprotein C to exit the ER and traffic to the Golgi (PubMed:19302268).</text>
</comment>
<comment type="PTM">
    <molecule>Envelopment polyprotein</molecule>
    <text evidence="3">Specific enzymatic cleavages in vivo yield mature proteins including Glycoprotein N and Glycoprotein C.</text>
</comment>
<comment type="PTM">
    <molecule>Glycoprotein N</molecule>
    <text evidence="4">Glycosylated with O-linked glycans (PubMed:15542672). Glycosylation is essential for proper subcellular location.</text>
</comment>
<comment type="PTM">
    <molecule>Glycoprotein C</molecule>
    <text evidence="5">Cleaved at acidic pH.</text>
</comment>
<comment type="miscellaneous">
    <text evidence="15">Tospoviruses are transmitted from plant to plant by thrips as the insect vector.</text>
</comment>
<comment type="similarity">
    <text evidence="15">Belongs to the tospovirus envelope glycoprotein family.</text>
</comment>
<keyword id="KW-0002">3D-structure</keyword>
<keyword id="KW-1015">Disulfide bond</keyword>
<keyword id="KW-1170">Fusion of virus membrane with host endosomal membrane</keyword>
<keyword id="KW-1168">Fusion of virus membrane with host membrane</keyword>
<keyword id="KW-0325">Glycoprotein</keyword>
<keyword id="KW-1038">Host endoplasmic reticulum</keyword>
<keyword id="KW-1040">Host Golgi apparatus</keyword>
<keyword id="KW-1043">Host membrane</keyword>
<keyword id="KW-0945">Host-virus interaction</keyword>
<keyword id="KW-0472">Membrane</keyword>
<keyword id="KW-1185">Reference proteome</keyword>
<keyword id="KW-0732">Signal</keyword>
<keyword id="KW-0812">Transmembrane</keyword>
<keyword id="KW-1133">Transmembrane helix</keyword>
<keyword id="KW-1161">Viral attachment to host cell</keyword>
<keyword id="KW-1162">Viral penetration into host cytoplasm</keyword>
<keyword id="KW-0946">Virion</keyword>
<keyword id="KW-1160">Virus entry into host cell</keyword>
<evidence type="ECO:0000250" key="1">
    <source>
        <dbReference type="UniProtKB" id="P08668"/>
    </source>
</evidence>
<evidence type="ECO:0000255" key="2"/>
<evidence type="ECO:0000269" key="3">
    <source>
    </source>
</evidence>
<evidence type="ECO:0000269" key="4">
    <source>
    </source>
</evidence>
<evidence type="ECO:0000269" key="5">
    <source>
    </source>
</evidence>
<evidence type="ECO:0000269" key="6">
    <source>
    </source>
</evidence>
<evidence type="ECO:0000269" key="7">
    <source>
    </source>
</evidence>
<evidence type="ECO:0000269" key="8">
    <source>
    </source>
</evidence>
<evidence type="ECO:0000269" key="9">
    <source>
    </source>
</evidence>
<evidence type="ECO:0000269" key="10">
    <source>
    </source>
</evidence>
<evidence type="ECO:0000269" key="11">
    <source>
    </source>
</evidence>
<evidence type="ECO:0000303" key="12">
    <source>
    </source>
</evidence>
<evidence type="ECO:0000303" key="13">
    <source>
    </source>
</evidence>
<evidence type="ECO:0000303" key="14">
    <source>
    </source>
</evidence>
<evidence type="ECO:0000305" key="15"/>
<evidence type="ECO:0000305" key="16">
    <source>
    </source>
</evidence>
<evidence type="ECO:0000305" key="17">
    <source>
    </source>
</evidence>
<evidence type="ECO:0007744" key="18">
    <source>
        <dbReference type="PDB" id="6Y9L"/>
    </source>
</evidence>
<evidence type="ECO:0007744" key="19">
    <source>
        <dbReference type="PDB" id="6Y9M"/>
    </source>
</evidence>
<evidence type="ECO:0007744" key="20">
    <source>
        <dbReference type="PDB" id="6YA0"/>
    </source>
</evidence>
<evidence type="ECO:0007744" key="21">
    <source>
        <dbReference type="PDB" id="6YA2"/>
    </source>
</evidence>
<evidence type="ECO:0007829" key="22">
    <source>
        <dbReference type="PDB" id="6Y9M"/>
    </source>
</evidence>
<evidence type="ECO:0007829" key="23">
    <source>
        <dbReference type="PDB" id="6YA0"/>
    </source>
</evidence>
<evidence type="ECO:0007829" key="24">
    <source>
        <dbReference type="PDB" id="6YA2"/>
    </source>
</evidence>
<reference key="1">
    <citation type="journal article" date="1992" name="J. Gen. Virol.">
        <title>The nucleotide sequence of the M RNA segment of tomato spotted wilt virus, a bunyavirus with two ambisense RNA segments.</title>
        <authorList>
            <person name="Kormelink R."/>
            <person name="de Haan P."/>
            <person name="Meurs C."/>
            <person name="Peters D."/>
            <person name="Goldbach R."/>
        </authorList>
    </citation>
    <scope>NUCLEOTIDE SEQUENCE [GENOMIC RNA]</scope>
</reference>
<reference key="2">
    <citation type="journal article" date="1993" name="J. Gen. Virol.">
        <authorList>
            <person name="Kormelink R."/>
            <person name="de Haan P."/>
            <person name="Meurs C."/>
            <person name="Peters D."/>
            <person name="Goldbach R."/>
        </authorList>
    </citation>
    <scope>ERRATUM OF PUBMED:1431808</scope>
</reference>
<reference key="3">
    <citation type="journal article" date="2001" name="J. Virol.">
        <title>Tomato spotted wilt virus glycoproteins exhibit trafficking and localization signals that are functional in mammalian cells.</title>
        <authorList>
            <person name="Kikkert M."/>
            <person name="Verschoor A."/>
            <person name="Kormelink R."/>
            <person name="Rottier P."/>
            <person name="Goldbach R."/>
        </authorList>
    </citation>
    <scope>PROTEOLYTIC PROCESSING (ENVELOPMENT POLYPROTEIN)</scope>
    <scope>SUBCELLULAR LOCATION (GLYCOPROTEIN N)</scope>
    <scope>SUBCELLULAR LOCATION (GLYCOPROTEIN C)</scope>
    <scope>DOMAIN (GLYCOPROTEIN N)</scope>
</reference>
<reference key="4">
    <citation type="journal article" date="2004" name="J. Virol.">
        <title>Expression and characterization of a soluble form of tomato spotted wilt virus glycoprotein GN.</title>
        <authorList>
            <person name="Whitfield A.E."/>
            <person name="Ullman D.E."/>
            <person name="German T.L."/>
        </authorList>
    </citation>
    <scope>GLYCOSYLATION (GLYCOPROTEIN N)</scope>
    <scope>SUBUNIT (GLYCOPROTEIN N)</scope>
</reference>
<reference key="5">
    <citation type="journal article" date="2005" name="Virus Res.">
        <title>Tomato spotted wilt virus glycoprotein G(C) is cleaved at acidic pH.</title>
        <authorList>
            <person name="Whitfield A.E."/>
            <person name="Ullman D.E."/>
            <person name="German T.L."/>
        </authorList>
    </citation>
    <scope>PROTEOLYTIC CLEAVAGE (GLYCOPROTEIN C)</scope>
</reference>
<reference key="6">
    <citation type="journal article" date="2007" name="Virology">
        <title>The cytoplasmic domain of tomato spotted wilt virus Gn glycoprotein is required for Golgi localisation and interaction with Gc.</title>
        <authorList>
            <person name="Snippe M."/>
            <person name="Smeenk L."/>
            <person name="Goldbach R."/>
            <person name="Kormelink R."/>
        </authorList>
    </citation>
    <scope>SUBCELLULAR LOCATION (GLYCOPROTEIN N)</scope>
    <scope>SUBUNIT (GLYCOPROTEIN N)</scope>
    <scope>SUBUNIT (GLYCOPROTEIN C)</scope>
    <scope>DOMAIN (GLYCOPROTEIN N)</scope>
</reference>
<reference key="7">
    <citation type="journal article" date="2008" name="J. Gen. Virol.">
        <title>Tomato spotted wilt virus glycoproteins induce the formation of endoplasmic reticulum- and Golgi-derived pleomorphic membrane structures in plant cells.</title>
        <authorList>
            <person name="Ribeiro D."/>
            <person name="Foresti O."/>
            <person name="Denecke J."/>
            <person name="Wellink J."/>
            <person name="Goldbach R."/>
            <person name="Kormelink R.J."/>
        </authorList>
    </citation>
    <scope>SUBCELLULAR LOCATION (GLYCOPROTEIN N)</scope>
    <scope>SUBCELLULAR LOCATION (GLYCOPROTEIN C)</scope>
</reference>
<reference key="8">
    <citation type="journal article" date="2009" name="Traffic">
        <title>Requirements for ER-arrest and sequential exit to the golgi of Tomato spotted wilt virus glycoproteins.</title>
        <authorList>
            <person name="Ribeiro D."/>
            <person name="Goldbach R."/>
            <person name="Kormelink R."/>
        </authorList>
    </citation>
    <scope>DOMAIN (GLYCOPROTEIN N)</scope>
</reference>
<reference key="9">
    <citation type="journal article" date="2009" name="Virology">
        <title>Tomato spotted wilt virus nucleocapsid protein interacts with both viral glycoproteins Gn and Gc in planta.</title>
        <authorList>
            <person name="Ribeiro D."/>
            <person name="Borst J.W."/>
            <person name="Goldbach R."/>
            <person name="Kormelink R."/>
        </authorList>
    </citation>
    <scope>INTERACTION WITH NUCLEOPROTEIN (GLYCOPROTEIN N)</scope>
    <scope>INTERACTION WITH NUCLEOPROTEIN (GLYCOPROTEIN C)</scope>
</reference>
<reference key="10">
    <citation type="journal article" date="2019" name="J. Virol.">
        <title>Discovery of Novel Thrips Vector Proteins That Bind to the Viral Attachment Protein of the Plant Bunyavirus Tomato Spotted Wilt Virus.</title>
        <authorList>
            <person name="Badillo-Vargas I.E."/>
            <person name="Chen Y."/>
            <person name="Martin K.M."/>
            <person name="Rotenberg D."/>
            <person name="Whitfield A.E."/>
        </authorList>
    </citation>
    <scope>FUNCTION (GLYCOPROTEIN N)</scope>
    <scope>FUNCTION (GLYCOPROTEIN C)</scope>
</reference>
<reference key="11">
    <citation type="journal article" date="2021" name="Viruses">
        <title>Recent Advances in Bunyavirus Glycoprotein Research: Precursor Processing, Receptor Binding and Structure.</title>
        <authorList>
            <person name="Hulswit R.J.G."/>
            <person name="Paesen G.C."/>
            <person name="Bowden T.A."/>
            <person name="Shi X."/>
        </authorList>
    </citation>
    <scope>REVIEW</scope>
</reference>
<reference evidence="18 19 20 21" key="12">
    <citation type="journal article" date="2020" name="Proc. Natl. Acad. Sci. U.S.A.">
        <title>Crystal structure of tomato spotted wilt virus GN reveals a dimer complex formation and evolutionary link to animal-infecting viruses.</title>
        <authorList>
            <person name="Bahat Y."/>
            <person name="Alter J."/>
            <person name="Dessau M."/>
        </authorList>
    </citation>
    <scope>X-RAY CRYSTALLOGRAPHY (3.40 ANGSTROMS) OF 36-319</scope>
    <scope>SUBUNIT</scope>
    <scope>DISULFIDE BOND</scope>
    <scope>GLYCOSYLATION AT ASN-116 AND ASN-210</scope>
</reference>
<organismHost>
    <name type="scientific">Frankliniella occidentalis</name>
    <name type="common">Western flower thrips</name>
    <name type="synonym">Euthrips occidentalis</name>
    <dbReference type="NCBI Taxonomy" id="133901"/>
</organismHost>
<organismHost>
    <name type="scientific">Scirtothrips dorsalis</name>
    <name type="common">Chilli thrips</name>
    <dbReference type="NCBI Taxonomy" id="163899"/>
</organismHost>
<organismHost>
    <name type="scientific">Solanum lycopersicum</name>
    <name type="common">Tomato</name>
    <name type="synonym">Lycopersicon esculentum</name>
    <dbReference type="NCBI Taxonomy" id="4081"/>
</organismHost>
<organismHost>
    <name type="scientific">Thrips tabaci</name>
    <dbReference type="NCBI Taxonomy" id="161014"/>
</organismHost>
<feature type="signal peptide" evidence="2">
    <location>
        <begin position="1"/>
        <end position="35"/>
    </location>
</feature>
<feature type="chain" id="PRO_0000036859" description="Envelopment polyprotein">
    <location>
        <begin position="36"/>
        <end position="1135"/>
    </location>
</feature>
<feature type="chain" id="PRO_0000036860" description="Glycoprotein N">
    <location>
        <begin position="36"/>
        <end position="484"/>
    </location>
</feature>
<feature type="chain" id="PRO_0000036861" description="Glycoprotein C">
    <location>
        <begin position="485"/>
        <end position="1135"/>
    </location>
</feature>
<feature type="topological domain" description="Lumenal" evidence="2">
    <location>
        <begin position="36"/>
        <end position="314"/>
    </location>
</feature>
<feature type="transmembrane region" description="Helical" evidence="2 12 13">
    <location>
        <begin position="315"/>
        <end position="366"/>
    </location>
</feature>
<feature type="topological domain" description="Cytoplasmic" evidence="2">
    <location>
        <begin position="367"/>
        <end position="484"/>
    </location>
</feature>
<feature type="topological domain" description="Lumenal" evidence="2">
    <location>
        <begin position="485"/>
        <end position="1067"/>
    </location>
</feature>
<feature type="transmembrane region" description="Helical" evidence="2">
    <location>
        <begin position="1068"/>
        <end position="1088"/>
    </location>
</feature>
<feature type="topological domain" description="Cytoplasmic" evidence="2">
    <location>
        <begin position="1089"/>
        <end position="1135"/>
    </location>
</feature>
<feature type="region of interest" description="Non-covalent dimerization" evidence="11">
    <location>
        <begin position="177"/>
        <end position="195"/>
    </location>
</feature>
<feature type="region of interest" description="Signal for signal peptide peptidase" evidence="14">
    <location>
        <begin position="437"/>
        <end position="484"/>
    </location>
</feature>
<feature type="short sequence motif" description="Cell attachment site" evidence="2">
    <location>
        <begin position="41"/>
        <end position="43"/>
    </location>
</feature>
<feature type="site" description="Cleavage; by host signal peptidase" evidence="3">
    <location>
        <begin position="484"/>
        <end position="485"/>
    </location>
</feature>
<feature type="glycosylation site" description="N-linked (GlcNAc...) asparagine; by host" evidence="11">
    <location>
        <position position="116"/>
    </location>
</feature>
<feature type="glycosylation site" description="N-linked (GlcNAc...) asparagine; by host" evidence="11">
    <location>
        <position position="210"/>
    </location>
</feature>
<feature type="glycosylation site" description="N-linked (GlcNAc...) asparagine; by host" evidence="2">
    <location>
        <position position="605"/>
    </location>
</feature>
<feature type="glycosylation site" description="N-linked (GlcNAc...) asparagine; by host" evidence="2">
    <location>
        <position position="980"/>
    </location>
</feature>
<feature type="disulfide bond" evidence="11">
    <location>
        <begin position="114"/>
        <end position="145"/>
    </location>
</feature>
<feature type="disulfide bond" evidence="11">
    <location>
        <begin position="122"/>
        <end position="156"/>
    </location>
</feature>
<feature type="disulfide bond" evidence="11">
    <location>
        <begin position="224"/>
        <end position="285"/>
    </location>
</feature>
<feature type="disulfide bond" description="Interchain" evidence="11">
    <location>
        <position position="302"/>
    </location>
</feature>
<feature type="turn" evidence="24">
    <location>
        <begin position="110"/>
        <end position="114"/>
    </location>
</feature>
<feature type="helix" evidence="23">
    <location>
        <begin position="116"/>
        <end position="118"/>
    </location>
</feature>
<feature type="strand" evidence="24">
    <location>
        <begin position="120"/>
        <end position="127"/>
    </location>
</feature>
<feature type="strand" evidence="24">
    <location>
        <begin position="132"/>
        <end position="138"/>
    </location>
</feature>
<feature type="strand" evidence="24">
    <location>
        <begin position="141"/>
        <end position="148"/>
    </location>
</feature>
<feature type="strand" evidence="24">
    <location>
        <begin position="156"/>
        <end position="158"/>
    </location>
</feature>
<feature type="strand" evidence="24">
    <location>
        <begin position="171"/>
        <end position="173"/>
    </location>
</feature>
<feature type="helix" evidence="24">
    <location>
        <begin position="177"/>
        <end position="179"/>
    </location>
</feature>
<feature type="helix" evidence="24">
    <location>
        <begin position="180"/>
        <end position="183"/>
    </location>
</feature>
<feature type="strand" evidence="24">
    <location>
        <begin position="184"/>
        <end position="193"/>
    </location>
</feature>
<feature type="strand" evidence="22">
    <location>
        <begin position="195"/>
        <end position="197"/>
    </location>
</feature>
<feature type="strand" evidence="24">
    <location>
        <begin position="200"/>
        <end position="204"/>
    </location>
</feature>
<feature type="strand" evidence="24">
    <location>
        <begin position="207"/>
        <end position="220"/>
    </location>
</feature>
<feature type="strand" evidence="24">
    <location>
        <begin position="225"/>
        <end position="227"/>
    </location>
</feature>
<feature type="strand" evidence="24">
    <location>
        <begin position="236"/>
        <end position="251"/>
    </location>
</feature>
<feature type="strand" evidence="24">
    <location>
        <begin position="262"/>
        <end position="271"/>
    </location>
</feature>
<feature type="helix" evidence="24">
    <location>
        <begin position="275"/>
        <end position="277"/>
    </location>
</feature>
<feature type="strand" evidence="23">
    <location>
        <begin position="278"/>
        <end position="280"/>
    </location>
</feature>
<feature type="strand" evidence="24">
    <location>
        <begin position="281"/>
        <end position="285"/>
    </location>
</feature>
<feature type="strand" evidence="24">
    <location>
        <begin position="288"/>
        <end position="292"/>
    </location>
</feature>
<feature type="helix" evidence="22">
    <location>
        <begin position="297"/>
        <end position="303"/>
    </location>
</feature>
<feature type="helix" evidence="22">
    <location>
        <begin position="305"/>
        <end position="308"/>
    </location>
</feature>
<accession>P36291</accession>
<proteinExistence type="evidence at protein level"/>
<gene>
    <name type="primary">GP</name>
</gene>
<sequence>MRILKLLELVVKVSLFTIALSSVLLAFLIFRATDAKVEIIRGDHPEIYDDSAENEVPTAASIQREAILETLTNLMLESRTPGTRQIREEKSTIPISAEPTTQKTISVLDLPNNCLNASSLKCEIKGISTYNVYYQVENNGVIYSCVSDSAEGLEKCDNSLNLPKRFSKVPVIPITKLDKKRHFSVGGKFFISESLTQDNYPITYNSYPTNGTVSLQTVKLSGDCKITKSNFANPYTVSITSPEKIMGYLIKKPGENVEHKVISFSGSASITFTEEMLDGEHNLLCGDKSAKIPKTNKRVRDCIIKYSKSIYKQTACINFSWIRLILIALLIYFPIRWLVNKTTKPLFLWYDLMGLITYPVLLLINCLWKYFPLKCSNCGNLCIVTHECTKVCICNKSKASKEHSSECPILSKEADHDYNKHKWTSMEWFHLIVNTKLSLSLLKFVTEILIGLVILSQMPMSMAQTTQCLSGCFYVPGCPFLVTSKFEKCSEKDQCYCNVKEDKIIESIFGTNIVIEGPNDCIENQNCIARPSIDNLIKCRLGCEYLDLFRNKPLYNGFSDYTGSSLGLTSVGLYEAKRLRNGIIDSYNRQGKISGMVAGDSLNKNETSIPENILPRQSLIFDSVVDGKYRYMIEQSLLGGGGTIFMLNDKTSETAKKFVIYIKSVGIHYEVSEKYTTAPIQSTHTDFYSTCTGNCDTCRKNQALTGFQDFCVTPTSYWGCEEAWCFAINEGATCGFCRNIYDMDKSYRIYSVLKSTIVADVCISGILGGQCSRITEEVPYENTLFQADIQADLHNDGITIGELIAHGPDSHIYSGNIANLNDPVKMFGHPQLTHDGVPIFTKKTLEGDDMSWDCAAIGKKSVTIKTCGYDTYRFRSGLEQISDIPVSFKDFSSFFLAKSFSLGKLKMVVDLPSDLFKVAPKKPSITSTSLNCNGCLLCGQGLSCLLEFFSDLTFSTAISIDACSLSTYQLAVKKGSNKYNITMFCSANPDKKKMTLYPEGNPDISVEVLVNNVIVEEPENIIDQNDEYAHEEQQYNSDSSAWGFWDYIKSPFNFIASYFGSFFDTIRVVLLIAFIFLVTYFCSILTSICKGYVKNESYKSRSKIEDDDEPEIKAPMLMKDTMTRRRPPMDFSHLV</sequence>